<evidence type="ECO:0000255" key="1">
    <source>
        <dbReference type="HAMAP-Rule" id="MF_00815"/>
    </source>
</evidence>
<gene>
    <name evidence="1" type="primary">atpG</name>
    <name type="ordered locus">EF_2609</name>
</gene>
<sequence>MGASLNEIKQRIASTKKTSQITKAMQMVSAAKLTKSEGASKSFQEYSSKIRSVVTHLVAAQLSELRETEQSSLSEGNYHVMLAQRPVKKTGYIVITSDKGLVGGYNSSILKQTMSMIQEDHDSNKEYALIAIGGTGADFFKARGIDVSYELRGLTDQPTFEEVRKIVTTATTMYQNEVFDELYVCYNHHVNSLTSQFRVEKMLPITDLDPSEATSYEQEYLLEPSPEAILDQLLPQYAESLIYGAIIDAKTAEHAAGMTAMKTATDNAQNIISDLTISYNRARQGAITQEITEIVAGAAALE</sequence>
<name>ATPG_ENTFA</name>
<accession>Q831A4</accession>
<keyword id="KW-0066">ATP synthesis</keyword>
<keyword id="KW-1003">Cell membrane</keyword>
<keyword id="KW-0139">CF(1)</keyword>
<keyword id="KW-0375">Hydrogen ion transport</keyword>
<keyword id="KW-0406">Ion transport</keyword>
<keyword id="KW-0472">Membrane</keyword>
<keyword id="KW-1185">Reference proteome</keyword>
<keyword id="KW-0813">Transport</keyword>
<feature type="chain" id="PRO_0000073279" description="ATP synthase gamma chain">
    <location>
        <begin position="1"/>
        <end position="302"/>
    </location>
</feature>
<reference key="1">
    <citation type="journal article" date="2003" name="Science">
        <title>Role of mobile DNA in the evolution of vancomycin-resistant Enterococcus faecalis.</title>
        <authorList>
            <person name="Paulsen I.T."/>
            <person name="Banerjei L."/>
            <person name="Myers G.S.A."/>
            <person name="Nelson K.E."/>
            <person name="Seshadri R."/>
            <person name="Read T.D."/>
            <person name="Fouts D.E."/>
            <person name="Eisen J.A."/>
            <person name="Gill S.R."/>
            <person name="Heidelberg J.F."/>
            <person name="Tettelin H."/>
            <person name="Dodson R.J."/>
            <person name="Umayam L.A."/>
            <person name="Brinkac L.M."/>
            <person name="Beanan M.J."/>
            <person name="Daugherty S.C."/>
            <person name="DeBoy R.T."/>
            <person name="Durkin S.A."/>
            <person name="Kolonay J.F."/>
            <person name="Madupu R."/>
            <person name="Nelson W.C."/>
            <person name="Vamathevan J.J."/>
            <person name="Tran B."/>
            <person name="Upton J."/>
            <person name="Hansen T."/>
            <person name="Shetty J."/>
            <person name="Khouri H.M."/>
            <person name="Utterback T.R."/>
            <person name="Radune D."/>
            <person name="Ketchum K.A."/>
            <person name="Dougherty B.A."/>
            <person name="Fraser C.M."/>
        </authorList>
    </citation>
    <scope>NUCLEOTIDE SEQUENCE [LARGE SCALE GENOMIC DNA]</scope>
    <source>
        <strain>ATCC 700802 / V583</strain>
    </source>
</reference>
<protein>
    <recommendedName>
        <fullName evidence="1">ATP synthase gamma chain</fullName>
    </recommendedName>
    <alternativeName>
        <fullName evidence="1">ATP synthase F1 sector gamma subunit</fullName>
    </alternativeName>
    <alternativeName>
        <fullName evidence="1">F-ATPase gamma subunit</fullName>
    </alternativeName>
</protein>
<organism>
    <name type="scientific">Enterococcus faecalis (strain ATCC 700802 / V583)</name>
    <dbReference type="NCBI Taxonomy" id="226185"/>
    <lineage>
        <taxon>Bacteria</taxon>
        <taxon>Bacillati</taxon>
        <taxon>Bacillota</taxon>
        <taxon>Bacilli</taxon>
        <taxon>Lactobacillales</taxon>
        <taxon>Enterococcaceae</taxon>
        <taxon>Enterococcus</taxon>
    </lineage>
</organism>
<dbReference type="EMBL" id="AE016830">
    <property type="protein sequence ID" value="AAO82318.1"/>
    <property type="molecule type" value="Genomic_DNA"/>
</dbReference>
<dbReference type="RefSeq" id="NP_816248.1">
    <property type="nucleotide sequence ID" value="NC_004668.1"/>
</dbReference>
<dbReference type="RefSeq" id="WP_002359606.1">
    <property type="nucleotide sequence ID" value="NZ_KE136528.1"/>
</dbReference>
<dbReference type="SMR" id="Q831A4"/>
<dbReference type="STRING" id="226185.EF_2609"/>
<dbReference type="EnsemblBacteria" id="AAO82318">
    <property type="protein sequence ID" value="AAO82318"/>
    <property type="gene ID" value="EF_2609"/>
</dbReference>
<dbReference type="KEGG" id="efa:EF2609"/>
<dbReference type="PATRIC" id="fig|226185.45.peg.947"/>
<dbReference type="eggNOG" id="COG0224">
    <property type="taxonomic scope" value="Bacteria"/>
</dbReference>
<dbReference type="HOGENOM" id="CLU_050669_0_1_9"/>
<dbReference type="Proteomes" id="UP000001415">
    <property type="component" value="Chromosome"/>
</dbReference>
<dbReference type="GO" id="GO:0005886">
    <property type="term" value="C:plasma membrane"/>
    <property type="evidence" value="ECO:0007669"/>
    <property type="project" value="UniProtKB-SubCell"/>
</dbReference>
<dbReference type="GO" id="GO:0045259">
    <property type="term" value="C:proton-transporting ATP synthase complex"/>
    <property type="evidence" value="ECO:0007669"/>
    <property type="project" value="UniProtKB-KW"/>
</dbReference>
<dbReference type="GO" id="GO:0005524">
    <property type="term" value="F:ATP binding"/>
    <property type="evidence" value="ECO:0007669"/>
    <property type="project" value="UniProtKB-UniRule"/>
</dbReference>
<dbReference type="GO" id="GO:0046933">
    <property type="term" value="F:proton-transporting ATP synthase activity, rotational mechanism"/>
    <property type="evidence" value="ECO:0007669"/>
    <property type="project" value="UniProtKB-UniRule"/>
</dbReference>
<dbReference type="GO" id="GO:0042777">
    <property type="term" value="P:proton motive force-driven plasma membrane ATP synthesis"/>
    <property type="evidence" value="ECO:0007669"/>
    <property type="project" value="UniProtKB-UniRule"/>
</dbReference>
<dbReference type="CDD" id="cd12151">
    <property type="entry name" value="F1-ATPase_gamma"/>
    <property type="match status" value="1"/>
</dbReference>
<dbReference type="FunFam" id="3.40.1380.10:FF:000002">
    <property type="entry name" value="ATP synthase gamma chain"/>
    <property type="match status" value="1"/>
</dbReference>
<dbReference type="Gene3D" id="3.40.1380.10">
    <property type="match status" value="1"/>
</dbReference>
<dbReference type="Gene3D" id="1.10.287.80">
    <property type="entry name" value="ATP synthase, gamma subunit, helix hairpin domain"/>
    <property type="match status" value="1"/>
</dbReference>
<dbReference type="HAMAP" id="MF_00815">
    <property type="entry name" value="ATP_synth_gamma_bact"/>
    <property type="match status" value="1"/>
</dbReference>
<dbReference type="InterPro" id="IPR035968">
    <property type="entry name" value="ATP_synth_F1_ATPase_gsu"/>
</dbReference>
<dbReference type="InterPro" id="IPR000131">
    <property type="entry name" value="ATP_synth_F1_gsu"/>
</dbReference>
<dbReference type="InterPro" id="IPR023632">
    <property type="entry name" value="ATP_synth_F1_gsu_CS"/>
</dbReference>
<dbReference type="NCBIfam" id="TIGR01146">
    <property type="entry name" value="ATPsyn_F1gamma"/>
    <property type="match status" value="1"/>
</dbReference>
<dbReference type="NCBIfam" id="NF004147">
    <property type="entry name" value="PRK05621.2-1"/>
    <property type="match status" value="1"/>
</dbReference>
<dbReference type="PANTHER" id="PTHR11693">
    <property type="entry name" value="ATP SYNTHASE GAMMA CHAIN"/>
    <property type="match status" value="1"/>
</dbReference>
<dbReference type="PANTHER" id="PTHR11693:SF22">
    <property type="entry name" value="ATP SYNTHASE SUBUNIT GAMMA, MITOCHONDRIAL"/>
    <property type="match status" value="1"/>
</dbReference>
<dbReference type="Pfam" id="PF00231">
    <property type="entry name" value="ATP-synt"/>
    <property type="match status" value="1"/>
</dbReference>
<dbReference type="PRINTS" id="PR00126">
    <property type="entry name" value="ATPASEGAMMA"/>
</dbReference>
<dbReference type="SUPFAM" id="SSF52943">
    <property type="entry name" value="ATP synthase (F1-ATPase), gamma subunit"/>
    <property type="match status" value="1"/>
</dbReference>
<dbReference type="PROSITE" id="PS00153">
    <property type="entry name" value="ATPASE_GAMMA"/>
    <property type="match status" value="1"/>
</dbReference>
<comment type="function">
    <text evidence="1">Produces ATP from ADP in the presence of a proton gradient across the membrane. The gamma chain is believed to be important in regulating ATPase activity and the flow of protons through the CF(0) complex.</text>
</comment>
<comment type="subunit">
    <text evidence="1">F-type ATPases have 2 components, CF(1) - the catalytic core - and CF(0) - the membrane proton channel. CF(1) has five subunits: alpha(3), beta(3), gamma(1), delta(1), epsilon(1). CF(0) has three main subunits: a, b and c.</text>
</comment>
<comment type="subcellular location">
    <subcellularLocation>
        <location evidence="1">Cell membrane</location>
        <topology evidence="1">Peripheral membrane protein</topology>
    </subcellularLocation>
</comment>
<comment type="similarity">
    <text evidence="1">Belongs to the ATPase gamma chain family.</text>
</comment>
<proteinExistence type="inferred from homology"/>